<feature type="chain" id="PRO_0000101579" description="Ribosomal RNA small subunit methyltransferase A">
    <location>
        <begin position="1"/>
        <end position="272"/>
    </location>
</feature>
<feature type="binding site" evidence="1">
    <location>
        <position position="18"/>
    </location>
    <ligand>
        <name>S-adenosyl-L-methionine</name>
        <dbReference type="ChEBI" id="CHEBI:59789"/>
    </ligand>
</feature>
<feature type="binding site" evidence="1">
    <location>
        <position position="20"/>
    </location>
    <ligand>
        <name>S-adenosyl-L-methionine</name>
        <dbReference type="ChEBI" id="CHEBI:59789"/>
    </ligand>
</feature>
<feature type="binding site" evidence="1">
    <location>
        <position position="45"/>
    </location>
    <ligand>
        <name>S-adenosyl-L-methionine</name>
        <dbReference type="ChEBI" id="CHEBI:59789"/>
    </ligand>
</feature>
<feature type="binding site" evidence="1">
    <location>
        <position position="66"/>
    </location>
    <ligand>
        <name>S-adenosyl-L-methionine</name>
        <dbReference type="ChEBI" id="CHEBI:59789"/>
    </ligand>
</feature>
<feature type="binding site" evidence="1">
    <location>
        <position position="91"/>
    </location>
    <ligand>
        <name>S-adenosyl-L-methionine</name>
        <dbReference type="ChEBI" id="CHEBI:59789"/>
    </ligand>
</feature>
<feature type="binding site" evidence="1">
    <location>
        <position position="113"/>
    </location>
    <ligand>
        <name>S-adenosyl-L-methionine</name>
        <dbReference type="ChEBI" id="CHEBI:59789"/>
    </ligand>
</feature>
<reference key="1">
    <citation type="journal article" date="2003" name="Nat. Biotechnol.">
        <title>The genome sequence of the entomopathogenic bacterium Photorhabdus luminescens.</title>
        <authorList>
            <person name="Duchaud E."/>
            <person name="Rusniok C."/>
            <person name="Frangeul L."/>
            <person name="Buchrieser C."/>
            <person name="Givaudan A."/>
            <person name="Taourit S."/>
            <person name="Bocs S."/>
            <person name="Boursaux-Eude C."/>
            <person name="Chandler M."/>
            <person name="Charles J.-F."/>
            <person name="Dassa E."/>
            <person name="Derose R."/>
            <person name="Derzelle S."/>
            <person name="Freyssinet G."/>
            <person name="Gaudriault S."/>
            <person name="Medigue C."/>
            <person name="Lanois A."/>
            <person name="Powell K."/>
            <person name="Siguier P."/>
            <person name="Vincent R."/>
            <person name="Wingate V."/>
            <person name="Zouine M."/>
            <person name="Glaser P."/>
            <person name="Boemare N."/>
            <person name="Danchin A."/>
            <person name="Kunst F."/>
        </authorList>
    </citation>
    <scope>NUCLEOTIDE SEQUENCE [LARGE SCALE GENOMIC DNA]</scope>
    <source>
        <strain>DSM 15139 / CIP 105565 / TT01</strain>
    </source>
</reference>
<evidence type="ECO:0000255" key="1">
    <source>
        <dbReference type="HAMAP-Rule" id="MF_00607"/>
    </source>
</evidence>
<protein>
    <recommendedName>
        <fullName evidence="1">Ribosomal RNA small subunit methyltransferase A</fullName>
        <ecNumber evidence="1">2.1.1.182</ecNumber>
    </recommendedName>
    <alternativeName>
        <fullName evidence="1">16S rRNA (adenine(1518)-N(6)/adenine(1519)-N(6))-dimethyltransferase</fullName>
    </alternativeName>
    <alternativeName>
        <fullName evidence="1">16S rRNA dimethyladenosine transferase</fullName>
    </alternativeName>
    <alternativeName>
        <fullName evidence="1">16S rRNA dimethylase</fullName>
    </alternativeName>
    <alternativeName>
        <fullName evidence="1">S-adenosylmethionine-6-N', N'-adenosyl(rRNA) dimethyltransferase</fullName>
    </alternativeName>
</protein>
<dbReference type="EC" id="2.1.1.182" evidence="1"/>
<dbReference type="EMBL" id="BX571860">
    <property type="protein sequence ID" value="CAE12904.1"/>
    <property type="molecule type" value="Genomic_DNA"/>
</dbReference>
<dbReference type="RefSeq" id="WP_011144986.1">
    <property type="nucleotide sequence ID" value="NC_005126.1"/>
</dbReference>
<dbReference type="SMR" id="Q7N8V7"/>
<dbReference type="STRING" id="243265.plu0609"/>
<dbReference type="GeneID" id="48846896"/>
<dbReference type="KEGG" id="plu:plu0609"/>
<dbReference type="eggNOG" id="COG0030">
    <property type="taxonomic scope" value="Bacteria"/>
</dbReference>
<dbReference type="HOGENOM" id="CLU_041220_0_1_6"/>
<dbReference type="OrthoDB" id="9814755at2"/>
<dbReference type="Proteomes" id="UP000002514">
    <property type="component" value="Chromosome"/>
</dbReference>
<dbReference type="GO" id="GO:0005829">
    <property type="term" value="C:cytosol"/>
    <property type="evidence" value="ECO:0007669"/>
    <property type="project" value="TreeGrafter"/>
</dbReference>
<dbReference type="GO" id="GO:0052908">
    <property type="term" value="F:16S rRNA (adenine(1518)-N(6)/adenine(1519)-N(6))-dimethyltransferase activity"/>
    <property type="evidence" value="ECO:0007669"/>
    <property type="project" value="UniProtKB-EC"/>
</dbReference>
<dbReference type="GO" id="GO:0003723">
    <property type="term" value="F:RNA binding"/>
    <property type="evidence" value="ECO:0007669"/>
    <property type="project" value="UniProtKB-KW"/>
</dbReference>
<dbReference type="CDD" id="cd02440">
    <property type="entry name" value="AdoMet_MTases"/>
    <property type="match status" value="1"/>
</dbReference>
<dbReference type="FunFam" id="1.10.8.100:FF:000001">
    <property type="entry name" value="Ribosomal RNA small subunit methyltransferase A"/>
    <property type="match status" value="1"/>
</dbReference>
<dbReference type="FunFam" id="3.40.50.150:FF:000006">
    <property type="entry name" value="Ribosomal RNA small subunit methyltransferase A"/>
    <property type="match status" value="1"/>
</dbReference>
<dbReference type="Gene3D" id="1.10.8.100">
    <property type="entry name" value="Ribosomal RNA adenine dimethylase-like, domain 2"/>
    <property type="match status" value="1"/>
</dbReference>
<dbReference type="Gene3D" id="3.40.50.150">
    <property type="entry name" value="Vaccinia Virus protein VP39"/>
    <property type="match status" value="1"/>
</dbReference>
<dbReference type="HAMAP" id="MF_00607">
    <property type="entry name" value="16SrRNA_methyltr_A"/>
    <property type="match status" value="1"/>
</dbReference>
<dbReference type="InterPro" id="IPR001737">
    <property type="entry name" value="KsgA/Erm"/>
</dbReference>
<dbReference type="InterPro" id="IPR023165">
    <property type="entry name" value="rRNA_Ade_diMease-like_C"/>
</dbReference>
<dbReference type="InterPro" id="IPR020596">
    <property type="entry name" value="rRNA_Ade_Mease_Trfase_CS"/>
</dbReference>
<dbReference type="InterPro" id="IPR020598">
    <property type="entry name" value="rRNA_Ade_methylase_Trfase_N"/>
</dbReference>
<dbReference type="InterPro" id="IPR011530">
    <property type="entry name" value="rRNA_adenine_dimethylase"/>
</dbReference>
<dbReference type="InterPro" id="IPR029063">
    <property type="entry name" value="SAM-dependent_MTases_sf"/>
</dbReference>
<dbReference type="NCBIfam" id="TIGR00755">
    <property type="entry name" value="ksgA"/>
    <property type="match status" value="1"/>
</dbReference>
<dbReference type="PANTHER" id="PTHR11727">
    <property type="entry name" value="DIMETHYLADENOSINE TRANSFERASE"/>
    <property type="match status" value="1"/>
</dbReference>
<dbReference type="PANTHER" id="PTHR11727:SF7">
    <property type="entry name" value="DIMETHYLADENOSINE TRANSFERASE-RELATED"/>
    <property type="match status" value="1"/>
</dbReference>
<dbReference type="Pfam" id="PF00398">
    <property type="entry name" value="RrnaAD"/>
    <property type="match status" value="1"/>
</dbReference>
<dbReference type="SMART" id="SM00650">
    <property type="entry name" value="rADc"/>
    <property type="match status" value="1"/>
</dbReference>
<dbReference type="SUPFAM" id="SSF53335">
    <property type="entry name" value="S-adenosyl-L-methionine-dependent methyltransferases"/>
    <property type="match status" value="1"/>
</dbReference>
<dbReference type="PROSITE" id="PS01131">
    <property type="entry name" value="RRNA_A_DIMETH"/>
    <property type="match status" value="1"/>
</dbReference>
<dbReference type="PROSITE" id="PS51689">
    <property type="entry name" value="SAM_RNA_A_N6_MT"/>
    <property type="match status" value="1"/>
</dbReference>
<keyword id="KW-0963">Cytoplasm</keyword>
<keyword id="KW-0489">Methyltransferase</keyword>
<keyword id="KW-1185">Reference proteome</keyword>
<keyword id="KW-0694">RNA-binding</keyword>
<keyword id="KW-0698">rRNA processing</keyword>
<keyword id="KW-0949">S-adenosyl-L-methionine</keyword>
<keyword id="KW-0808">Transferase</keyword>
<sequence length="272" mass="30536">MNNRVHQGHFARKRFGQNFLTDQFVIDSIAAAINPQPGQAVLEIGPGLGALTEPVGERMDKMTVVELDRDLAARLQVHPQLKDKLTIIQQDAMTVNFGELSQQRGKPLRVFGNLPYNISTPLMFHLFSYTDAIADMHFMLQKEVVNRLVAGPGSKTFGRLSVMAQYYCQVIPVLEVPPTAFTPAPKVDSAVVRLVPHKSIPHPVKNIRMLSRITTQAFNQRRKTIRNSLGDLFTVEQLTELGIDPSTRAENISVEQYCKMANWLSEQPEMQS</sequence>
<organism>
    <name type="scientific">Photorhabdus laumondii subsp. laumondii (strain DSM 15139 / CIP 105565 / TT01)</name>
    <name type="common">Photorhabdus luminescens subsp. laumondii</name>
    <dbReference type="NCBI Taxonomy" id="243265"/>
    <lineage>
        <taxon>Bacteria</taxon>
        <taxon>Pseudomonadati</taxon>
        <taxon>Pseudomonadota</taxon>
        <taxon>Gammaproteobacteria</taxon>
        <taxon>Enterobacterales</taxon>
        <taxon>Morganellaceae</taxon>
        <taxon>Photorhabdus</taxon>
    </lineage>
</organism>
<comment type="function">
    <text evidence="1">Specifically dimethylates two adjacent adenosines (A1518 and A1519) in the loop of a conserved hairpin near the 3'-end of 16S rRNA in the 30S particle. May play a critical role in biogenesis of 30S subunits.</text>
</comment>
<comment type="catalytic activity">
    <reaction evidence="1">
        <text>adenosine(1518)/adenosine(1519) in 16S rRNA + 4 S-adenosyl-L-methionine = N(6)-dimethyladenosine(1518)/N(6)-dimethyladenosine(1519) in 16S rRNA + 4 S-adenosyl-L-homocysteine + 4 H(+)</text>
        <dbReference type="Rhea" id="RHEA:19609"/>
        <dbReference type="Rhea" id="RHEA-COMP:10232"/>
        <dbReference type="Rhea" id="RHEA-COMP:10233"/>
        <dbReference type="ChEBI" id="CHEBI:15378"/>
        <dbReference type="ChEBI" id="CHEBI:57856"/>
        <dbReference type="ChEBI" id="CHEBI:59789"/>
        <dbReference type="ChEBI" id="CHEBI:74411"/>
        <dbReference type="ChEBI" id="CHEBI:74493"/>
        <dbReference type="EC" id="2.1.1.182"/>
    </reaction>
</comment>
<comment type="subcellular location">
    <subcellularLocation>
        <location evidence="1">Cytoplasm</location>
    </subcellularLocation>
</comment>
<comment type="similarity">
    <text evidence="1">Belongs to the class I-like SAM-binding methyltransferase superfamily. rRNA adenine N(6)-methyltransferase family. RsmA subfamily.</text>
</comment>
<proteinExistence type="inferred from homology"/>
<gene>
    <name evidence="1" type="primary">rsmA</name>
    <name evidence="1" type="synonym">ksgA</name>
    <name type="ordered locus">plu0609</name>
</gene>
<name>RSMA_PHOLL</name>
<accession>Q7N8V7</accession>